<keyword id="KW-0997">Cell inner membrane</keyword>
<keyword id="KW-1003">Cell membrane</keyword>
<keyword id="KW-0472">Membrane</keyword>
<keyword id="KW-1185">Reference proteome</keyword>
<keyword id="KW-0812">Transmembrane</keyword>
<keyword id="KW-1133">Transmembrane helix</keyword>
<keyword id="KW-0813">Transport</keyword>
<accession>Q8ZQD2</accession>
<sequence>MSTYTRPVMLLLCGLLLLTLAIAVLNTLVPLWLAQANLPTWQVGMVSSSYFTGNLVGTLFTGYLIKRIGFNRSYYLASLIFAAGCVGLGVMVGFWSWMSWRFIAGIGCAMIWVVVESALMCSGTSHNRGRLLAAYMMVYYMGTFLGQLLVSKVSGELLHVLPWVTGMILAGILPLLFTRIVNQQTQARHSSSISAMLKLRQARLGVNGCIISGIVLGSLYGLMPLYLKHQGMANASIGFWMAVLVSAGILGQWPMGRLADKFGRLLVLRVQVFVVILGSIAMLTQAAMAPALFILGAAGFTLYPVAMAWACEKVEHHQLVAMNQALLLSYTVGSLLGPSFAAMLMQNYSDNLLFIMIASVSFIYLLMLLRNAGQTPNPVAHI</sequence>
<gene>
    <name type="primary">ycaD</name>
    <name type="ordered locus">STM0968</name>
</gene>
<proteinExistence type="inferred from homology"/>
<feature type="chain" id="PRO_0000084893" description="Uncharacterized MFS-type transporter YcaD">
    <location>
        <begin position="1"/>
        <end position="382"/>
    </location>
</feature>
<feature type="topological domain" description="Cytoplasmic" evidence="2">
    <location>
        <begin position="1"/>
        <end position="7"/>
    </location>
</feature>
<feature type="transmembrane region" description="Helical" evidence="2">
    <location>
        <begin position="8"/>
        <end position="28"/>
    </location>
</feature>
<feature type="topological domain" description="Periplasmic" evidence="2">
    <location>
        <begin position="29"/>
        <end position="44"/>
    </location>
</feature>
<feature type="transmembrane region" description="Helical" evidence="2">
    <location>
        <begin position="45"/>
        <end position="65"/>
    </location>
</feature>
<feature type="topological domain" description="Cytoplasmic" evidence="2">
    <location>
        <begin position="66"/>
        <end position="74"/>
    </location>
</feature>
<feature type="transmembrane region" description="Helical" evidence="2">
    <location>
        <begin position="75"/>
        <end position="95"/>
    </location>
</feature>
<feature type="topological domain" description="Periplasmic" evidence="2">
    <location>
        <begin position="96"/>
        <end position="101"/>
    </location>
</feature>
<feature type="transmembrane region" description="Helical" evidence="2">
    <location>
        <begin position="102"/>
        <end position="122"/>
    </location>
</feature>
<feature type="topological domain" description="Cytoplasmic" evidence="2">
    <location>
        <begin position="123"/>
        <end position="130"/>
    </location>
</feature>
<feature type="transmembrane region" description="Helical" evidence="2">
    <location>
        <begin position="131"/>
        <end position="151"/>
    </location>
</feature>
<feature type="topological domain" description="Periplasmic" evidence="2">
    <location>
        <begin position="152"/>
        <end position="156"/>
    </location>
</feature>
<feature type="transmembrane region" description="Helical" evidence="2">
    <location>
        <begin position="157"/>
        <end position="177"/>
    </location>
</feature>
<feature type="topological domain" description="Cytoplasmic" evidence="2">
    <location>
        <begin position="178"/>
        <end position="203"/>
    </location>
</feature>
<feature type="transmembrane region" description="Helical" evidence="2">
    <location>
        <begin position="204"/>
        <end position="224"/>
    </location>
</feature>
<feature type="topological domain" description="Periplasmic" evidence="2">
    <location>
        <begin position="225"/>
        <end position="230"/>
    </location>
</feature>
<feature type="transmembrane region" description="Helical" evidence="2">
    <location>
        <begin position="231"/>
        <end position="251"/>
    </location>
</feature>
<feature type="topological domain" description="Cytoplasmic" evidence="2">
    <location>
        <begin position="252"/>
        <end position="269"/>
    </location>
</feature>
<feature type="transmembrane region" description="Helical" evidence="2">
    <location>
        <begin position="270"/>
        <end position="290"/>
    </location>
</feature>
<feature type="transmembrane region" description="Helical" evidence="2">
    <location>
        <begin position="291"/>
        <end position="311"/>
    </location>
</feature>
<feature type="topological domain" description="Cytoplasmic" evidence="2">
    <location>
        <begin position="312"/>
        <end position="324"/>
    </location>
</feature>
<feature type="transmembrane region" description="Helical" evidence="2">
    <location>
        <begin position="325"/>
        <end position="345"/>
    </location>
</feature>
<feature type="topological domain" description="Periplasmic" evidence="2">
    <location>
        <begin position="346"/>
        <end position="348"/>
    </location>
</feature>
<feature type="transmembrane region" description="Helical" evidence="2">
    <location>
        <begin position="349"/>
        <end position="369"/>
    </location>
</feature>
<feature type="topological domain" description="Cytoplasmic" evidence="2">
    <location>
        <begin position="370"/>
        <end position="382"/>
    </location>
</feature>
<organism>
    <name type="scientific">Salmonella typhimurium (strain LT2 / SGSC1412 / ATCC 700720)</name>
    <dbReference type="NCBI Taxonomy" id="99287"/>
    <lineage>
        <taxon>Bacteria</taxon>
        <taxon>Pseudomonadati</taxon>
        <taxon>Pseudomonadota</taxon>
        <taxon>Gammaproteobacteria</taxon>
        <taxon>Enterobacterales</taxon>
        <taxon>Enterobacteriaceae</taxon>
        <taxon>Salmonella</taxon>
    </lineage>
</organism>
<reference key="1">
    <citation type="journal article" date="2001" name="Nature">
        <title>Complete genome sequence of Salmonella enterica serovar Typhimurium LT2.</title>
        <authorList>
            <person name="McClelland M."/>
            <person name="Sanderson K.E."/>
            <person name="Spieth J."/>
            <person name="Clifton S.W."/>
            <person name="Latreille P."/>
            <person name="Courtney L."/>
            <person name="Porwollik S."/>
            <person name="Ali J."/>
            <person name="Dante M."/>
            <person name="Du F."/>
            <person name="Hou S."/>
            <person name="Layman D."/>
            <person name="Leonard S."/>
            <person name="Nguyen C."/>
            <person name="Scott K."/>
            <person name="Holmes A."/>
            <person name="Grewal N."/>
            <person name="Mulvaney E."/>
            <person name="Ryan E."/>
            <person name="Sun H."/>
            <person name="Florea L."/>
            <person name="Miller W."/>
            <person name="Stoneking T."/>
            <person name="Nhan M."/>
            <person name="Waterston R."/>
            <person name="Wilson R.K."/>
        </authorList>
    </citation>
    <scope>NUCLEOTIDE SEQUENCE [LARGE SCALE GENOMIC DNA]</scope>
    <source>
        <strain>LT2 / SGSC1412 / ATCC 700720</strain>
    </source>
</reference>
<dbReference type="EMBL" id="AE006468">
    <property type="protein sequence ID" value="AAL19902.1"/>
    <property type="molecule type" value="Genomic_DNA"/>
</dbReference>
<dbReference type="RefSeq" id="NP_459943.1">
    <property type="nucleotide sequence ID" value="NC_003197.2"/>
</dbReference>
<dbReference type="RefSeq" id="WP_000109271.1">
    <property type="nucleotide sequence ID" value="NC_003197.2"/>
</dbReference>
<dbReference type="SMR" id="Q8ZQD2"/>
<dbReference type="STRING" id="99287.STM0968"/>
<dbReference type="PaxDb" id="99287-STM0968"/>
<dbReference type="GeneID" id="1252486"/>
<dbReference type="KEGG" id="stm:STM0968"/>
<dbReference type="PATRIC" id="fig|99287.12.peg.1020"/>
<dbReference type="HOGENOM" id="CLU_035018_1_2_6"/>
<dbReference type="OMA" id="YLSHQGM"/>
<dbReference type="PhylomeDB" id="Q8ZQD2"/>
<dbReference type="BioCyc" id="SENT99287:STM0968-MONOMER"/>
<dbReference type="Proteomes" id="UP000001014">
    <property type="component" value="Chromosome"/>
</dbReference>
<dbReference type="GO" id="GO:0005886">
    <property type="term" value="C:plasma membrane"/>
    <property type="evidence" value="ECO:0000318"/>
    <property type="project" value="GO_Central"/>
</dbReference>
<dbReference type="GO" id="GO:0022857">
    <property type="term" value="F:transmembrane transporter activity"/>
    <property type="evidence" value="ECO:0007669"/>
    <property type="project" value="UniProtKB-UniRule"/>
</dbReference>
<dbReference type="CDD" id="cd17477">
    <property type="entry name" value="MFS_YcaD_like"/>
    <property type="match status" value="1"/>
</dbReference>
<dbReference type="FunFam" id="1.20.1250.20:FF:000041">
    <property type="entry name" value="Uncharacterized MFS-type transporter YcaD"/>
    <property type="match status" value="1"/>
</dbReference>
<dbReference type="FunFam" id="1.20.1250.20:FF:000066">
    <property type="entry name" value="Uncharacterized MFS-type transporter YcaD"/>
    <property type="match status" value="1"/>
</dbReference>
<dbReference type="Gene3D" id="1.20.1250.20">
    <property type="entry name" value="MFS general substrate transporter like domains"/>
    <property type="match status" value="2"/>
</dbReference>
<dbReference type="HAMAP" id="MF_01149">
    <property type="entry name" value="MFS_YcaD"/>
    <property type="match status" value="1"/>
</dbReference>
<dbReference type="InterPro" id="IPR011701">
    <property type="entry name" value="MFS"/>
</dbReference>
<dbReference type="InterPro" id="IPR020846">
    <property type="entry name" value="MFS_dom"/>
</dbReference>
<dbReference type="InterPro" id="IPR036259">
    <property type="entry name" value="MFS_trans_sf"/>
</dbReference>
<dbReference type="InterPro" id="IPR023745">
    <property type="entry name" value="MFS_YcaD"/>
</dbReference>
<dbReference type="InterPro" id="IPR047200">
    <property type="entry name" value="MFS_YcaD-like"/>
</dbReference>
<dbReference type="NCBIfam" id="NF002962">
    <property type="entry name" value="PRK03633.1"/>
    <property type="match status" value="1"/>
</dbReference>
<dbReference type="PANTHER" id="PTHR23521">
    <property type="entry name" value="TRANSPORTER MFS SUPERFAMILY"/>
    <property type="match status" value="1"/>
</dbReference>
<dbReference type="PANTHER" id="PTHR23521:SF2">
    <property type="entry name" value="TRANSPORTER MFS SUPERFAMILY"/>
    <property type="match status" value="1"/>
</dbReference>
<dbReference type="Pfam" id="PF07690">
    <property type="entry name" value="MFS_1"/>
    <property type="match status" value="1"/>
</dbReference>
<dbReference type="SUPFAM" id="SSF103473">
    <property type="entry name" value="MFS general substrate transporter"/>
    <property type="match status" value="1"/>
</dbReference>
<dbReference type="PROSITE" id="PS50850">
    <property type="entry name" value="MFS"/>
    <property type="match status" value="1"/>
</dbReference>
<comment type="subcellular location">
    <subcellularLocation>
        <location evidence="1">Cell inner membrane</location>
        <topology evidence="1">Multi-pass membrane protein</topology>
    </subcellularLocation>
</comment>
<comment type="similarity">
    <text evidence="3">Belongs to the major facilitator superfamily. YcaD (TC 2.A.1.26) family.</text>
</comment>
<name>YCAD_SALTY</name>
<protein>
    <recommendedName>
        <fullName>Uncharacterized MFS-type transporter YcaD</fullName>
    </recommendedName>
</protein>
<evidence type="ECO:0000250" key="1"/>
<evidence type="ECO:0000255" key="2"/>
<evidence type="ECO:0000305" key="3"/>